<reference key="1">
    <citation type="journal article" date="2007" name="J. Bacteriol.">
        <title>Genome sequence of Avery's virulent serotype 2 strain D39 of Streptococcus pneumoniae and comparison with that of unencapsulated laboratory strain R6.</title>
        <authorList>
            <person name="Lanie J.A."/>
            <person name="Ng W.-L."/>
            <person name="Kazmierczak K.M."/>
            <person name="Andrzejewski T.M."/>
            <person name="Davidsen T.M."/>
            <person name="Wayne K.J."/>
            <person name="Tettelin H."/>
            <person name="Glass J.I."/>
            <person name="Winkler M.E."/>
        </authorList>
    </citation>
    <scope>NUCLEOTIDE SEQUENCE [LARGE SCALE GENOMIC DNA]</scope>
    <source>
        <strain>D39 / NCTC 7466</strain>
    </source>
</reference>
<evidence type="ECO:0000255" key="1">
    <source>
        <dbReference type="HAMAP-Rule" id="MF_00170"/>
    </source>
</evidence>
<protein>
    <recommendedName>
        <fullName evidence="1">Ribose-5-phosphate isomerase A</fullName>
        <ecNumber evidence="1">5.3.1.6</ecNumber>
    </recommendedName>
    <alternativeName>
        <fullName evidence="1">Phosphoriboisomerase A</fullName>
        <shortName evidence="1">PRI</shortName>
    </alternativeName>
</protein>
<dbReference type="EC" id="5.3.1.6" evidence="1"/>
<dbReference type="EMBL" id="CP000410">
    <property type="protein sequence ID" value="ABJ54742.1"/>
    <property type="molecule type" value="Genomic_DNA"/>
</dbReference>
<dbReference type="RefSeq" id="WP_000429299.1">
    <property type="nucleotide sequence ID" value="NZ_JAMLJR010000018.1"/>
</dbReference>
<dbReference type="SMR" id="Q04L82"/>
<dbReference type="PaxDb" id="373153-SPD_0723"/>
<dbReference type="GeneID" id="45653812"/>
<dbReference type="KEGG" id="spd:SPD_0723"/>
<dbReference type="eggNOG" id="COG0120">
    <property type="taxonomic scope" value="Bacteria"/>
</dbReference>
<dbReference type="HOGENOM" id="CLU_056590_1_0_9"/>
<dbReference type="BioCyc" id="SPNE373153:G1G6V-794-MONOMER"/>
<dbReference type="UniPathway" id="UPA00115">
    <property type="reaction ID" value="UER00412"/>
</dbReference>
<dbReference type="Proteomes" id="UP000001452">
    <property type="component" value="Chromosome"/>
</dbReference>
<dbReference type="GO" id="GO:0004751">
    <property type="term" value="F:ribose-5-phosphate isomerase activity"/>
    <property type="evidence" value="ECO:0007669"/>
    <property type="project" value="UniProtKB-UniRule"/>
</dbReference>
<dbReference type="GO" id="GO:0009052">
    <property type="term" value="P:pentose-phosphate shunt, non-oxidative branch"/>
    <property type="evidence" value="ECO:0007669"/>
    <property type="project" value="UniProtKB-UniRule"/>
</dbReference>
<dbReference type="CDD" id="cd01398">
    <property type="entry name" value="RPI_A"/>
    <property type="match status" value="1"/>
</dbReference>
<dbReference type="FunFam" id="3.40.50.1360:FF:000001">
    <property type="entry name" value="Ribose-5-phosphate isomerase A"/>
    <property type="match status" value="1"/>
</dbReference>
<dbReference type="Gene3D" id="3.30.70.260">
    <property type="match status" value="1"/>
</dbReference>
<dbReference type="Gene3D" id="3.40.50.1360">
    <property type="match status" value="1"/>
</dbReference>
<dbReference type="HAMAP" id="MF_00170">
    <property type="entry name" value="Rib_5P_isom_A"/>
    <property type="match status" value="1"/>
</dbReference>
<dbReference type="InterPro" id="IPR037171">
    <property type="entry name" value="NagB/RpiA_transferase-like"/>
</dbReference>
<dbReference type="InterPro" id="IPR050262">
    <property type="entry name" value="Ribose-5P_isomerase"/>
</dbReference>
<dbReference type="InterPro" id="IPR020672">
    <property type="entry name" value="Ribose5P_isomerase_typA_subgr"/>
</dbReference>
<dbReference type="InterPro" id="IPR004788">
    <property type="entry name" value="Ribose5P_isomerase_type_A"/>
</dbReference>
<dbReference type="NCBIfam" id="NF001924">
    <property type="entry name" value="PRK00702.1"/>
    <property type="match status" value="1"/>
</dbReference>
<dbReference type="NCBIfam" id="TIGR00021">
    <property type="entry name" value="rpiA"/>
    <property type="match status" value="1"/>
</dbReference>
<dbReference type="PANTHER" id="PTHR43748">
    <property type="entry name" value="RIBOSE-5-PHOSPHATE ISOMERASE 3, CHLOROPLASTIC-RELATED"/>
    <property type="match status" value="1"/>
</dbReference>
<dbReference type="PANTHER" id="PTHR43748:SF3">
    <property type="entry name" value="RIBOSE-5-PHOSPHATE ISOMERASE 3, CHLOROPLASTIC-RELATED"/>
    <property type="match status" value="1"/>
</dbReference>
<dbReference type="Pfam" id="PF06026">
    <property type="entry name" value="Rib_5-P_isom_A"/>
    <property type="match status" value="1"/>
</dbReference>
<dbReference type="SUPFAM" id="SSF75445">
    <property type="entry name" value="D-ribose-5-phosphate isomerase (RpiA), lid domain"/>
    <property type="match status" value="1"/>
</dbReference>
<dbReference type="SUPFAM" id="SSF100950">
    <property type="entry name" value="NagB/RpiA/CoA transferase-like"/>
    <property type="match status" value="1"/>
</dbReference>
<comment type="function">
    <text evidence="1">Catalyzes the reversible conversion of ribose-5-phosphate to ribulose 5-phosphate.</text>
</comment>
<comment type="catalytic activity">
    <reaction evidence="1">
        <text>aldehydo-D-ribose 5-phosphate = D-ribulose 5-phosphate</text>
        <dbReference type="Rhea" id="RHEA:14657"/>
        <dbReference type="ChEBI" id="CHEBI:58121"/>
        <dbReference type="ChEBI" id="CHEBI:58273"/>
        <dbReference type="EC" id="5.3.1.6"/>
    </reaction>
</comment>
<comment type="pathway">
    <text evidence="1">Carbohydrate degradation; pentose phosphate pathway; D-ribose 5-phosphate from D-ribulose 5-phosphate (non-oxidative stage): step 1/1.</text>
</comment>
<comment type="subunit">
    <text evidence="1">Homodimer.</text>
</comment>
<comment type="similarity">
    <text evidence="1">Belongs to the ribose 5-phosphate isomerase family.</text>
</comment>
<proteinExistence type="inferred from homology"/>
<sequence>MENLKKMAGIKAAEFVSDGMVVGLGTGSTAYYFVEEIGRRIKEEGLQITAVTTSSVTTKQAEGLNIPLKSIDQVDFVDVTVDGADEVDSQFNGIKGGGGALLMEKVVATPSKEYIWVVDESKLVEKLGAFKLPVEVVQYGAEQVFRHFERAGYKPSFREKDGQRFVTDMQNFIIDLALDVIENPIAFGQELDHVVGVVEHGLFNQMVDKVIVAGRDGVQISTSKKGK</sequence>
<accession>Q04L82</accession>
<keyword id="KW-0413">Isomerase</keyword>
<keyword id="KW-1185">Reference proteome</keyword>
<organism>
    <name type="scientific">Streptococcus pneumoniae serotype 2 (strain D39 / NCTC 7466)</name>
    <dbReference type="NCBI Taxonomy" id="373153"/>
    <lineage>
        <taxon>Bacteria</taxon>
        <taxon>Bacillati</taxon>
        <taxon>Bacillota</taxon>
        <taxon>Bacilli</taxon>
        <taxon>Lactobacillales</taxon>
        <taxon>Streptococcaceae</taxon>
        <taxon>Streptococcus</taxon>
    </lineage>
</organism>
<name>RPIA_STRP2</name>
<gene>
    <name evidence="1" type="primary">rpiA</name>
    <name type="ordered locus">SPD_0723</name>
</gene>
<feature type="chain" id="PRO_1000017007" description="Ribose-5-phosphate isomerase A">
    <location>
        <begin position="1"/>
        <end position="227"/>
    </location>
</feature>
<feature type="active site" description="Proton acceptor" evidence="1">
    <location>
        <position position="104"/>
    </location>
</feature>
<feature type="binding site" evidence="1">
    <location>
        <begin position="26"/>
        <end position="29"/>
    </location>
    <ligand>
        <name>substrate</name>
    </ligand>
</feature>
<feature type="binding site" evidence="1">
    <location>
        <begin position="82"/>
        <end position="85"/>
    </location>
    <ligand>
        <name>substrate</name>
    </ligand>
</feature>
<feature type="binding site" evidence="1">
    <location>
        <begin position="95"/>
        <end position="98"/>
    </location>
    <ligand>
        <name>substrate</name>
    </ligand>
</feature>
<feature type="binding site" evidence="1">
    <location>
        <position position="122"/>
    </location>
    <ligand>
        <name>substrate</name>
    </ligand>
</feature>